<proteinExistence type="inferred from homology"/>
<organism>
    <name type="scientific">Neisseria meningitidis serogroup B (strain ATCC BAA-335 / MC58)</name>
    <dbReference type="NCBI Taxonomy" id="122586"/>
    <lineage>
        <taxon>Bacteria</taxon>
        <taxon>Pseudomonadati</taxon>
        <taxon>Pseudomonadota</taxon>
        <taxon>Betaproteobacteria</taxon>
        <taxon>Neisseriales</taxon>
        <taxon>Neisseriaceae</taxon>
        <taxon>Neisseria</taxon>
    </lineage>
</organism>
<sequence length="320" mass="35800">MPSISVRRLFDDNQYKLQLAWAAGNSGADNRIGVEADKPVLALVGHLNFIHPNQIQVVGLAESEYLNRLESGETGYQFGDLFDISMSLVIVANGLPVSPGLRDYCHKNDIPLLTSKLESPYLMDVLRIYLQRTLAASSVKHGVFLDVFEIGVLITGHSGLGKSELALELISRGHSLIADDAVELFRIGPETLEGRCSPMLRDFLEVRGLGILNIRHIFGETSIRPKKILQLIINLVEADDEYMKQLDRLSIRTETESILNVNVRSVTLPVAVGRNLAVLVEAAVRNYILQLRGKDSTREFLERHQTQLKENEQHNEDRPD</sequence>
<name>HPRK_NEIMB</name>
<protein>
    <recommendedName>
        <fullName evidence="1">HPr kinase/phosphorylase</fullName>
        <shortName evidence="1">HPrK/P</shortName>
        <ecNumber evidence="1">2.7.11.-</ecNumber>
        <ecNumber evidence="1">2.7.4.-</ecNumber>
    </recommendedName>
    <alternativeName>
        <fullName evidence="1">HPr(Ser) kinase/phosphorylase</fullName>
    </alternativeName>
</protein>
<feature type="chain" id="PRO_0000058976" description="HPr kinase/phosphorylase">
    <location>
        <begin position="1"/>
        <end position="320"/>
    </location>
</feature>
<feature type="region of interest" description="Important for the catalytic mechanism of both phosphorylation and dephosphorylation" evidence="1">
    <location>
        <begin position="204"/>
        <end position="213"/>
    </location>
</feature>
<feature type="region of interest" description="Important for the catalytic mechanism of dephosphorylation" evidence="1">
    <location>
        <begin position="269"/>
        <end position="274"/>
    </location>
</feature>
<feature type="active site" evidence="1">
    <location>
        <position position="141"/>
    </location>
</feature>
<feature type="active site" evidence="1">
    <location>
        <position position="162"/>
    </location>
</feature>
<feature type="active site" description="Proton acceptor; for phosphorylation activity. Proton donor; for dephosphorylation activity" evidence="1">
    <location>
        <position position="180"/>
    </location>
</feature>
<feature type="active site" evidence="1">
    <location>
        <position position="248"/>
    </location>
</feature>
<feature type="binding site" evidence="1">
    <location>
        <begin position="156"/>
        <end position="163"/>
    </location>
    <ligand>
        <name>ATP</name>
        <dbReference type="ChEBI" id="CHEBI:30616"/>
    </ligand>
</feature>
<feature type="binding site" evidence="1">
    <location>
        <position position="163"/>
    </location>
    <ligand>
        <name>Mg(2+)</name>
        <dbReference type="ChEBI" id="CHEBI:18420"/>
    </ligand>
</feature>
<feature type="binding site" evidence="1">
    <location>
        <position position="205"/>
    </location>
    <ligand>
        <name>Mg(2+)</name>
        <dbReference type="ChEBI" id="CHEBI:18420"/>
    </ligand>
</feature>
<reference key="1">
    <citation type="journal article" date="2000" name="Science">
        <title>Complete genome sequence of Neisseria meningitidis serogroup B strain MC58.</title>
        <authorList>
            <person name="Tettelin H."/>
            <person name="Saunders N.J."/>
            <person name="Heidelberg J.F."/>
            <person name="Jeffries A.C."/>
            <person name="Nelson K.E."/>
            <person name="Eisen J.A."/>
            <person name="Ketchum K.A."/>
            <person name="Hood D.W."/>
            <person name="Peden J.F."/>
            <person name="Dodson R.J."/>
            <person name="Nelson W.C."/>
            <person name="Gwinn M.L."/>
            <person name="DeBoy R.T."/>
            <person name="Peterson J.D."/>
            <person name="Hickey E.K."/>
            <person name="Haft D.H."/>
            <person name="Salzberg S.L."/>
            <person name="White O."/>
            <person name="Fleischmann R.D."/>
            <person name="Dougherty B.A."/>
            <person name="Mason T.M."/>
            <person name="Ciecko A."/>
            <person name="Parksey D.S."/>
            <person name="Blair E."/>
            <person name="Cittone H."/>
            <person name="Clark E.B."/>
            <person name="Cotton M.D."/>
            <person name="Utterback T.R."/>
            <person name="Khouri H.M."/>
            <person name="Qin H."/>
            <person name="Vamathevan J.J."/>
            <person name="Gill J."/>
            <person name="Scarlato V."/>
            <person name="Masignani V."/>
            <person name="Pizza M."/>
            <person name="Grandi G."/>
            <person name="Sun L."/>
            <person name="Smith H.O."/>
            <person name="Fraser C.M."/>
            <person name="Moxon E.R."/>
            <person name="Rappuoli R."/>
            <person name="Venter J.C."/>
        </authorList>
    </citation>
    <scope>NUCLEOTIDE SEQUENCE [LARGE SCALE GENOMIC DNA]</scope>
    <source>
        <strain>ATCC BAA-335 / MC58</strain>
    </source>
</reference>
<gene>
    <name evidence="1" type="primary">hprK</name>
    <name type="ordered locus">NMB0737</name>
</gene>
<evidence type="ECO:0000255" key="1">
    <source>
        <dbReference type="HAMAP-Rule" id="MF_01249"/>
    </source>
</evidence>
<accession>Q9K081</accession>
<comment type="function">
    <text evidence="1">Catalyzes the ATP- as well as the pyrophosphate-dependent phosphorylation of a specific serine residue in HPr, a phosphocarrier protein of the phosphoenolpyruvate-dependent sugar phosphotransferase system (PTS). HprK/P also catalyzes the pyrophosphate-producing, inorganic phosphate-dependent dephosphorylation (phosphorolysis) of seryl-phosphorylated HPr (P-Ser-HPr).</text>
</comment>
<comment type="catalytic activity">
    <reaction evidence="1">
        <text>[HPr protein]-L-serine + ATP = [HPr protein]-O-phospho-L-serine + ADP + H(+)</text>
        <dbReference type="Rhea" id="RHEA:46600"/>
        <dbReference type="Rhea" id="RHEA-COMP:11602"/>
        <dbReference type="Rhea" id="RHEA-COMP:11603"/>
        <dbReference type="ChEBI" id="CHEBI:15378"/>
        <dbReference type="ChEBI" id="CHEBI:29999"/>
        <dbReference type="ChEBI" id="CHEBI:30616"/>
        <dbReference type="ChEBI" id="CHEBI:83421"/>
        <dbReference type="ChEBI" id="CHEBI:456216"/>
    </reaction>
</comment>
<comment type="catalytic activity">
    <reaction evidence="1">
        <text>[HPr protein]-O-phospho-L-serine + phosphate + H(+) = [HPr protein]-L-serine + diphosphate</text>
        <dbReference type="Rhea" id="RHEA:46604"/>
        <dbReference type="Rhea" id="RHEA-COMP:11602"/>
        <dbReference type="Rhea" id="RHEA-COMP:11603"/>
        <dbReference type="ChEBI" id="CHEBI:15378"/>
        <dbReference type="ChEBI" id="CHEBI:29999"/>
        <dbReference type="ChEBI" id="CHEBI:33019"/>
        <dbReference type="ChEBI" id="CHEBI:43474"/>
        <dbReference type="ChEBI" id="CHEBI:83421"/>
    </reaction>
</comment>
<comment type="cofactor">
    <cofactor evidence="1">
        <name>Mg(2+)</name>
        <dbReference type="ChEBI" id="CHEBI:18420"/>
    </cofactor>
</comment>
<comment type="subunit">
    <text evidence="1">Homohexamer.</text>
</comment>
<comment type="domain">
    <text evidence="1">The Walker A ATP-binding motif also binds Pi and PPi.</text>
</comment>
<comment type="miscellaneous">
    <text evidence="1">Both phosphorylation and phosphorolysis are carried out by the same active site and suggest a common mechanism for both reactions.</text>
</comment>
<comment type="similarity">
    <text evidence="1">Belongs to the HPrK/P family.</text>
</comment>
<keyword id="KW-0067">ATP-binding</keyword>
<keyword id="KW-0418">Kinase</keyword>
<keyword id="KW-0460">Magnesium</keyword>
<keyword id="KW-0479">Metal-binding</keyword>
<keyword id="KW-0511">Multifunctional enzyme</keyword>
<keyword id="KW-0547">Nucleotide-binding</keyword>
<keyword id="KW-1185">Reference proteome</keyword>
<keyword id="KW-0723">Serine/threonine-protein kinase</keyword>
<keyword id="KW-0808">Transferase</keyword>
<dbReference type="EC" id="2.7.11.-" evidence="1"/>
<dbReference type="EC" id="2.7.4.-" evidence="1"/>
<dbReference type="EMBL" id="AE002098">
    <property type="protein sequence ID" value="AAF41150.1"/>
    <property type="molecule type" value="Genomic_DNA"/>
</dbReference>
<dbReference type="PIR" id="A81165">
    <property type="entry name" value="A81165"/>
</dbReference>
<dbReference type="RefSeq" id="NP_273779.1">
    <property type="nucleotide sequence ID" value="NC_003112.2"/>
</dbReference>
<dbReference type="RefSeq" id="WP_002225452.1">
    <property type="nucleotide sequence ID" value="NC_003112.2"/>
</dbReference>
<dbReference type="SMR" id="Q9K081"/>
<dbReference type="STRING" id="122586.NMB0737"/>
<dbReference type="PaxDb" id="122586-NMB0737"/>
<dbReference type="GeneID" id="61223747"/>
<dbReference type="KEGG" id="nme:NMB0737"/>
<dbReference type="PATRIC" id="fig|122586.8.peg.937"/>
<dbReference type="HOGENOM" id="CLU_052030_0_2_4"/>
<dbReference type="InParanoid" id="Q9K081"/>
<dbReference type="OrthoDB" id="9778803at2"/>
<dbReference type="Proteomes" id="UP000000425">
    <property type="component" value="Chromosome"/>
</dbReference>
<dbReference type="GO" id="GO:0005829">
    <property type="term" value="C:cytosol"/>
    <property type="evidence" value="ECO:0000318"/>
    <property type="project" value="GO_Central"/>
</dbReference>
<dbReference type="GO" id="GO:0005524">
    <property type="term" value="F:ATP binding"/>
    <property type="evidence" value="ECO:0007669"/>
    <property type="project" value="UniProtKB-UniRule"/>
</dbReference>
<dbReference type="GO" id="GO:0000287">
    <property type="term" value="F:magnesium ion binding"/>
    <property type="evidence" value="ECO:0007669"/>
    <property type="project" value="UniProtKB-UniRule"/>
</dbReference>
<dbReference type="GO" id="GO:0000155">
    <property type="term" value="F:phosphorelay sensor kinase activity"/>
    <property type="evidence" value="ECO:0007669"/>
    <property type="project" value="InterPro"/>
</dbReference>
<dbReference type="GO" id="GO:0004674">
    <property type="term" value="F:protein serine/threonine kinase activity"/>
    <property type="evidence" value="ECO:0007669"/>
    <property type="project" value="UniProtKB-KW"/>
</dbReference>
<dbReference type="GO" id="GO:0004712">
    <property type="term" value="F:protein serine/threonine/tyrosine kinase activity"/>
    <property type="evidence" value="ECO:0007669"/>
    <property type="project" value="UniProtKB-UniRule"/>
</dbReference>
<dbReference type="GO" id="GO:0006109">
    <property type="term" value="P:regulation of carbohydrate metabolic process"/>
    <property type="evidence" value="ECO:0007669"/>
    <property type="project" value="UniProtKB-UniRule"/>
</dbReference>
<dbReference type="CDD" id="cd01918">
    <property type="entry name" value="HprK_C"/>
    <property type="match status" value="1"/>
</dbReference>
<dbReference type="FunFam" id="3.40.1390.20:FF:000004">
    <property type="entry name" value="HPr kinase/phosphorylase"/>
    <property type="match status" value="1"/>
</dbReference>
<dbReference type="FunFam" id="3.40.50.300:FF:000174">
    <property type="entry name" value="HPr kinase/phosphorylase"/>
    <property type="match status" value="1"/>
</dbReference>
<dbReference type="Gene3D" id="3.40.1390.20">
    <property type="entry name" value="HprK N-terminal domain-like"/>
    <property type="match status" value="1"/>
</dbReference>
<dbReference type="Gene3D" id="3.40.50.300">
    <property type="entry name" value="P-loop containing nucleotide triphosphate hydrolases"/>
    <property type="match status" value="1"/>
</dbReference>
<dbReference type="HAMAP" id="MF_01249">
    <property type="entry name" value="HPr_kinase"/>
    <property type="match status" value="1"/>
</dbReference>
<dbReference type="InterPro" id="IPR003755">
    <property type="entry name" value="HPr(Ser)_kin/Pase"/>
</dbReference>
<dbReference type="InterPro" id="IPR011104">
    <property type="entry name" value="Hpr_kin/Pase_C"/>
</dbReference>
<dbReference type="InterPro" id="IPR011126">
    <property type="entry name" value="Hpr_kin/Pase_Hpr_N"/>
</dbReference>
<dbReference type="InterPro" id="IPR027417">
    <property type="entry name" value="P-loop_NTPase"/>
</dbReference>
<dbReference type="InterPro" id="IPR028979">
    <property type="entry name" value="Ser_kin/Pase_Hpr-like_N_sf"/>
</dbReference>
<dbReference type="NCBIfam" id="TIGR00679">
    <property type="entry name" value="hpr-ser"/>
    <property type="match status" value="1"/>
</dbReference>
<dbReference type="PANTHER" id="PTHR30305:SF1">
    <property type="entry name" value="HPR KINASE_PHOSPHORYLASE"/>
    <property type="match status" value="1"/>
</dbReference>
<dbReference type="PANTHER" id="PTHR30305">
    <property type="entry name" value="PROTEIN YJDM-RELATED"/>
    <property type="match status" value="1"/>
</dbReference>
<dbReference type="Pfam" id="PF07475">
    <property type="entry name" value="Hpr_kinase_C"/>
    <property type="match status" value="1"/>
</dbReference>
<dbReference type="Pfam" id="PF02603">
    <property type="entry name" value="Hpr_kinase_N"/>
    <property type="match status" value="1"/>
</dbReference>
<dbReference type="SUPFAM" id="SSF75138">
    <property type="entry name" value="HprK N-terminal domain-like"/>
    <property type="match status" value="1"/>
</dbReference>
<dbReference type="SUPFAM" id="SSF53795">
    <property type="entry name" value="PEP carboxykinase-like"/>
    <property type="match status" value="1"/>
</dbReference>